<gene>
    <name evidence="1" type="primary">uppS</name>
    <name type="ordered locus">VV1_1864</name>
</gene>
<organism>
    <name type="scientific">Vibrio vulnificus (strain CMCP6)</name>
    <dbReference type="NCBI Taxonomy" id="216895"/>
    <lineage>
        <taxon>Bacteria</taxon>
        <taxon>Pseudomonadati</taxon>
        <taxon>Pseudomonadota</taxon>
        <taxon>Gammaproteobacteria</taxon>
        <taxon>Vibrionales</taxon>
        <taxon>Vibrionaceae</taxon>
        <taxon>Vibrio</taxon>
    </lineage>
</organism>
<name>UPPS_VIBVU</name>
<comment type="function">
    <text evidence="1">Catalyzes the sequential condensation of isopentenyl diphosphate (IPP) with (2E,6E)-farnesyl diphosphate (E,E-FPP) to yield (2Z,6Z,10Z,14Z,18Z,22Z,26Z,30Z,34E,38E)-undecaprenyl diphosphate (di-trans,octa-cis-UPP). UPP is the precursor of glycosyl carrier lipid in the biosynthesis of bacterial cell wall polysaccharide components such as peptidoglycan and lipopolysaccharide.</text>
</comment>
<comment type="catalytic activity">
    <reaction evidence="1">
        <text>8 isopentenyl diphosphate + (2E,6E)-farnesyl diphosphate = di-trans,octa-cis-undecaprenyl diphosphate + 8 diphosphate</text>
        <dbReference type="Rhea" id="RHEA:27551"/>
        <dbReference type="ChEBI" id="CHEBI:33019"/>
        <dbReference type="ChEBI" id="CHEBI:58405"/>
        <dbReference type="ChEBI" id="CHEBI:128769"/>
        <dbReference type="ChEBI" id="CHEBI:175763"/>
        <dbReference type="EC" id="2.5.1.31"/>
    </reaction>
</comment>
<comment type="cofactor">
    <cofactor evidence="1">
        <name>Mg(2+)</name>
        <dbReference type="ChEBI" id="CHEBI:18420"/>
    </cofactor>
    <text evidence="1">Binds 2 magnesium ions per subunit.</text>
</comment>
<comment type="subunit">
    <text evidence="1">Homodimer.</text>
</comment>
<comment type="similarity">
    <text evidence="1">Belongs to the UPP synthase family.</text>
</comment>
<proteinExistence type="inferred from homology"/>
<dbReference type="EC" id="2.5.1.31" evidence="1"/>
<dbReference type="EMBL" id="AE016795">
    <property type="protein sequence ID" value="AAO10266.1"/>
    <property type="molecule type" value="Genomic_DNA"/>
</dbReference>
<dbReference type="RefSeq" id="WP_011079766.1">
    <property type="nucleotide sequence ID" value="NC_004459.3"/>
</dbReference>
<dbReference type="SMR" id="Q8DBF7"/>
<dbReference type="KEGG" id="vvu:VV1_1864"/>
<dbReference type="HOGENOM" id="CLU_038505_1_1_6"/>
<dbReference type="Proteomes" id="UP000002275">
    <property type="component" value="Chromosome 1"/>
</dbReference>
<dbReference type="GO" id="GO:0005829">
    <property type="term" value="C:cytosol"/>
    <property type="evidence" value="ECO:0007669"/>
    <property type="project" value="TreeGrafter"/>
</dbReference>
<dbReference type="GO" id="GO:0008834">
    <property type="term" value="F:ditrans,polycis-undecaprenyl-diphosphate synthase [(2E,6E)-farnesyl-diphosphate specific] activity"/>
    <property type="evidence" value="ECO:0007669"/>
    <property type="project" value="UniProtKB-UniRule"/>
</dbReference>
<dbReference type="GO" id="GO:0000287">
    <property type="term" value="F:magnesium ion binding"/>
    <property type="evidence" value="ECO:0007669"/>
    <property type="project" value="UniProtKB-UniRule"/>
</dbReference>
<dbReference type="GO" id="GO:0071555">
    <property type="term" value="P:cell wall organization"/>
    <property type="evidence" value="ECO:0007669"/>
    <property type="project" value="UniProtKB-KW"/>
</dbReference>
<dbReference type="GO" id="GO:0009252">
    <property type="term" value="P:peptidoglycan biosynthetic process"/>
    <property type="evidence" value="ECO:0007669"/>
    <property type="project" value="UniProtKB-UniRule"/>
</dbReference>
<dbReference type="GO" id="GO:0016094">
    <property type="term" value="P:polyprenol biosynthetic process"/>
    <property type="evidence" value="ECO:0007669"/>
    <property type="project" value="TreeGrafter"/>
</dbReference>
<dbReference type="GO" id="GO:0008360">
    <property type="term" value="P:regulation of cell shape"/>
    <property type="evidence" value="ECO:0007669"/>
    <property type="project" value="UniProtKB-KW"/>
</dbReference>
<dbReference type="CDD" id="cd00475">
    <property type="entry name" value="Cis_IPPS"/>
    <property type="match status" value="1"/>
</dbReference>
<dbReference type="FunFam" id="3.40.1180.10:FF:000001">
    <property type="entry name" value="(2E,6E)-farnesyl-diphosphate-specific ditrans,polycis-undecaprenyl-diphosphate synthase"/>
    <property type="match status" value="1"/>
</dbReference>
<dbReference type="Gene3D" id="3.40.1180.10">
    <property type="entry name" value="Decaprenyl diphosphate synthase-like"/>
    <property type="match status" value="1"/>
</dbReference>
<dbReference type="HAMAP" id="MF_01139">
    <property type="entry name" value="ISPT"/>
    <property type="match status" value="1"/>
</dbReference>
<dbReference type="InterPro" id="IPR001441">
    <property type="entry name" value="UPP_synth-like"/>
</dbReference>
<dbReference type="InterPro" id="IPR018520">
    <property type="entry name" value="UPP_synth-like_CS"/>
</dbReference>
<dbReference type="InterPro" id="IPR036424">
    <property type="entry name" value="UPP_synth-like_sf"/>
</dbReference>
<dbReference type="NCBIfam" id="NF011405">
    <property type="entry name" value="PRK14830.1"/>
    <property type="match status" value="1"/>
</dbReference>
<dbReference type="NCBIfam" id="TIGR00055">
    <property type="entry name" value="uppS"/>
    <property type="match status" value="1"/>
</dbReference>
<dbReference type="PANTHER" id="PTHR10291:SF0">
    <property type="entry name" value="DEHYDRODOLICHYL DIPHOSPHATE SYNTHASE 2"/>
    <property type="match status" value="1"/>
</dbReference>
<dbReference type="PANTHER" id="PTHR10291">
    <property type="entry name" value="DEHYDRODOLICHYL DIPHOSPHATE SYNTHASE FAMILY MEMBER"/>
    <property type="match status" value="1"/>
</dbReference>
<dbReference type="Pfam" id="PF01255">
    <property type="entry name" value="Prenyltransf"/>
    <property type="match status" value="1"/>
</dbReference>
<dbReference type="SUPFAM" id="SSF64005">
    <property type="entry name" value="Undecaprenyl diphosphate synthase"/>
    <property type="match status" value="1"/>
</dbReference>
<dbReference type="PROSITE" id="PS01066">
    <property type="entry name" value="UPP_SYNTHASE"/>
    <property type="match status" value="1"/>
</dbReference>
<protein>
    <recommendedName>
        <fullName evidence="1">Ditrans,polycis-undecaprenyl-diphosphate synthase ((2E,6E)-farnesyl-diphosphate specific)</fullName>
        <ecNumber evidence="1">2.5.1.31</ecNumber>
    </recommendedName>
    <alternativeName>
        <fullName evidence="1">Ditrans,polycis-undecaprenylcistransferase</fullName>
    </alternativeName>
    <alternativeName>
        <fullName evidence="1">Undecaprenyl diphosphate synthase</fullName>
        <shortName evidence="1">UDS</shortName>
    </alternativeName>
    <alternativeName>
        <fullName evidence="1">Undecaprenyl pyrophosphate synthase</fullName>
        <shortName evidence="1">UPP synthase</shortName>
    </alternativeName>
</protein>
<evidence type="ECO:0000255" key="1">
    <source>
        <dbReference type="HAMAP-Rule" id="MF_01139"/>
    </source>
</evidence>
<accession>Q8DBF7</accession>
<sequence>MQNSQLFTESLPKHIAIIMDGNGRWAKSKGQPRVFGHKKGVSAVRKTIAAASKLNIQAITLFAFSSENWRRPEEEVGLLMELFITVLSSEVKKLHKNNLRLRIIGDTSRFSERLQKKIVEAQELTASNTGMVINVAANYGGKWDITQAVQKVAQQVALGDLSAEDITEDDIAKHLTMSDLPEVDLLIRTSGECRISNFMLWQMAYAEMYFTPVFWPDFGEESLIEAITWFVNRERRFGCTGEQIKALMSAQ</sequence>
<keyword id="KW-0133">Cell shape</keyword>
<keyword id="KW-0961">Cell wall biogenesis/degradation</keyword>
<keyword id="KW-0460">Magnesium</keyword>
<keyword id="KW-0479">Metal-binding</keyword>
<keyword id="KW-0573">Peptidoglycan synthesis</keyword>
<keyword id="KW-0808">Transferase</keyword>
<reference key="1">
    <citation type="submission" date="2002-12" db="EMBL/GenBank/DDBJ databases">
        <title>Complete genome sequence of Vibrio vulnificus CMCP6.</title>
        <authorList>
            <person name="Rhee J.H."/>
            <person name="Kim S.Y."/>
            <person name="Chung S.S."/>
            <person name="Kim J.J."/>
            <person name="Moon Y.H."/>
            <person name="Jeong H."/>
            <person name="Choy H.E."/>
        </authorList>
    </citation>
    <scope>NUCLEOTIDE SEQUENCE [LARGE SCALE GENOMIC DNA]</scope>
    <source>
        <strain>CMCP6</strain>
    </source>
</reference>
<feature type="chain" id="PRO_0000123714" description="Ditrans,polycis-undecaprenyl-diphosphate synthase ((2E,6E)-farnesyl-diphosphate specific)">
    <location>
        <begin position="1"/>
        <end position="251"/>
    </location>
</feature>
<feature type="active site" evidence="1">
    <location>
        <position position="20"/>
    </location>
</feature>
<feature type="active site" description="Proton acceptor" evidence="1">
    <location>
        <position position="68"/>
    </location>
</feature>
<feature type="binding site" evidence="1">
    <location>
        <position position="20"/>
    </location>
    <ligand>
        <name>Mg(2+)</name>
        <dbReference type="ChEBI" id="CHEBI:18420"/>
    </ligand>
</feature>
<feature type="binding site" evidence="1">
    <location>
        <begin position="21"/>
        <end position="24"/>
    </location>
    <ligand>
        <name>substrate</name>
    </ligand>
</feature>
<feature type="binding site" evidence="1">
    <location>
        <position position="25"/>
    </location>
    <ligand>
        <name>substrate</name>
    </ligand>
</feature>
<feature type="binding site" evidence="1">
    <location>
        <position position="33"/>
    </location>
    <ligand>
        <name>substrate</name>
    </ligand>
</feature>
<feature type="binding site" evidence="1">
    <location>
        <position position="37"/>
    </location>
    <ligand>
        <name>substrate</name>
    </ligand>
</feature>
<feature type="binding site" evidence="1">
    <location>
        <begin position="65"/>
        <end position="67"/>
    </location>
    <ligand>
        <name>substrate</name>
    </ligand>
</feature>
<feature type="binding site" evidence="1">
    <location>
        <position position="69"/>
    </location>
    <ligand>
        <name>substrate</name>
    </ligand>
</feature>
<feature type="binding site" evidence="1">
    <location>
        <position position="71"/>
    </location>
    <ligand>
        <name>substrate</name>
    </ligand>
</feature>
<feature type="binding site" evidence="1">
    <location>
        <position position="188"/>
    </location>
    <ligand>
        <name>substrate</name>
    </ligand>
</feature>
<feature type="binding site" evidence="1">
    <location>
        <begin position="194"/>
        <end position="196"/>
    </location>
    <ligand>
        <name>substrate</name>
    </ligand>
</feature>
<feature type="binding site" evidence="1">
    <location>
        <position position="207"/>
    </location>
    <ligand>
        <name>Mg(2+)</name>
        <dbReference type="ChEBI" id="CHEBI:18420"/>
    </ligand>
</feature>